<accession>Q85FX7</accession>
<dbReference type="EMBL" id="AB002583">
    <property type="protein sequence ID" value="BAC76216.1"/>
    <property type="molecule type" value="Genomic_DNA"/>
</dbReference>
<dbReference type="RefSeq" id="NP_849054.1">
    <property type="nucleotide sequence ID" value="NC_004799.1"/>
</dbReference>
<dbReference type="SMR" id="Q85FX7"/>
<dbReference type="STRING" id="280699.Q85FX7"/>
<dbReference type="EnsemblPlants" id="CMV148CT">
    <property type="protein sequence ID" value="CMV148CT"/>
    <property type="gene ID" value="CMV148C"/>
</dbReference>
<dbReference type="GeneID" id="844933"/>
<dbReference type="Gramene" id="CMV148CT">
    <property type="protein sequence ID" value="CMV148CT"/>
    <property type="gene ID" value="CMV148C"/>
</dbReference>
<dbReference type="KEGG" id="cme:CymeCp122"/>
<dbReference type="HOGENOM" id="CLU_215774_2_0_1"/>
<dbReference type="Proteomes" id="UP000007014">
    <property type="component" value="Chloroplast"/>
</dbReference>
<dbReference type="GO" id="GO:0009535">
    <property type="term" value="C:chloroplast thylakoid membrane"/>
    <property type="evidence" value="ECO:0007669"/>
    <property type="project" value="UniProtKB-SubCell"/>
</dbReference>
<dbReference type="GO" id="GO:0009512">
    <property type="term" value="C:cytochrome b6f complex"/>
    <property type="evidence" value="ECO:0007669"/>
    <property type="project" value="InterPro"/>
</dbReference>
<dbReference type="GO" id="GO:0045158">
    <property type="term" value="F:electron transporter, transferring electrons within cytochrome b6/f complex of photosystem II activity"/>
    <property type="evidence" value="ECO:0007669"/>
    <property type="project" value="InterPro"/>
</dbReference>
<dbReference type="GO" id="GO:0017004">
    <property type="term" value="P:cytochrome complex assembly"/>
    <property type="evidence" value="ECO:0007669"/>
    <property type="project" value="UniProtKB-UniRule"/>
</dbReference>
<dbReference type="GO" id="GO:0015979">
    <property type="term" value="P:photosynthesis"/>
    <property type="evidence" value="ECO:0007669"/>
    <property type="project" value="UniProtKB-KW"/>
</dbReference>
<dbReference type="HAMAP" id="MF_00395">
    <property type="entry name" value="Cytb6_f_PetN"/>
    <property type="match status" value="1"/>
</dbReference>
<dbReference type="InterPro" id="IPR036143">
    <property type="entry name" value="Cytochr_b6-f_cplx_su8_sf"/>
</dbReference>
<dbReference type="InterPro" id="IPR005497">
    <property type="entry name" value="Cytochrome_b6-f_cplx_su8"/>
</dbReference>
<dbReference type="Pfam" id="PF03742">
    <property type="entry name" value="PetN"/>
    <property type="match status" value="1"/>
</dbReference>
<dbReference type="SUPFAM" id="SSF103451">
    <property type="entry name" value="PetN subunit of the cytochrome b6f complex"/>
    <property type="match status" value="1"/>
</dbReference>
<proteinExistence type="inferred from homology"/>
<reference key="1">
    <citation type="journal article" date="2003" name="DNA Res.">
        <title>Complete sequence and analysis of the plastid genome of the unicellular red alga Cyanidioschyzon merolae.</title>
        <authorList>
            <person name="Ohta N."/>
            <person name="Matsuzaki M."/>
            <person name="Misumi O."/>
            <person name="Miyagishima S.-Y."/>
            <person name="Nozaki H."/>
            <person name="Tanaka K."/>
            <person name="Shin-i T."/>
            <person name="Kohara Y."/>
            <person name="Kuroiwa T."/>
        </authorList>
    </citation>
    <scope>NUCLEOTIDE SEQUENCE [LARGE SCALE GENOMIC DNA]</scope>
    <source>
        <strain>NIES-3377 / 10D</strain>
    </source>
</reference>
<evidence type="ECO:0000250" key="1"/>
<evidence type="ECO:0000255" key="2"/>
<evidence type="ECO:0000305" key="3"/>
<feature type="chain" id="PRO_0000217106" description="Cytochrome b6-f complex subunit 8">
    <location>
        <begin position="1"/>
        <end position="31"/>
    </location>
</feature>
<feature type="transmembrane region" description="Helical" evidence="2">
    <location>
        <begin position="5"/>
        <end position="25"/>
    </location>
</feature>
<keyword id="KW-0150">Chloroplast</keyword>
<keyword id="KW-0249">Electron transport</keyword>
<keyword id="KW-0472">Membrane</keyword>
<keyword id="KW-0602">Photosynthesis</keyword>
<keyword id="KW-0934">Plastid</keyword>
<keyword id="KW-1185">Reference proteome</keyword>
<keyword id="KW-0793">Thylakoid</keyword>
<keyword id="KW-0812">Transmembrane</keyword>
<keyword id="KW-1133">Transmembrane helix</keyword>
<keyword id="KW-0813">Transport</keyword>
<gene>
    <name type="primary">petN</name>
</gene>
<name>PETN_CYAM1</name>
<geneLocation type="chloroplast"/>
<comment type="function">
    <text evidence="1">Component of the cytochrome b6-f complex, which mediates electron transfer between photosystem II (PSII) and photosystem I (PSI), cyclic electron flow around PSI, and state transitions.</text>
</comment>
<comment type="subunit">
    <text evidence="1">The 4 large subunits of the cytochrome b6-f complex are cytochrome b6, subunit IV (17 kDa polypeptide, PetD), cytochrome f and the Rieske protein, while the 4 small subunits are PetG, PetL, PetM and PetN. The complex functions as a dimer (By similarity).</text>
</comment>
<comment type="subcellular location">
    <subcellularLocation>
        <location evidence="1">Plastid</location>
        <location evidence="1">Chloroplast thylakoid membrane</location>
        <topology evidence="1">Single-pass membrane protein</topology>
    </subcellularLocation>
</comment>
<comment type="similarity">
    <text evidence="3">Belongs to the PetN family.</text>
</comment>
<sequence length="31" mass="3419">MHLDLISITWGCLMATFTASLALVIWARNGL</sequence>
<protein>
    <recommendedName>
        <fullName>Cytochrome b6-f complex subunit 8</fullName>
    </recommendedName>
    <alternativeName>
        <fullName>Cytochrome b6-f complex subunit PetN</fullName>
    </alternativeName>
    <alternativeName>
        <fullName>Cytochrome b6-f complex subunit VIII</fullName>
    </alternativeName>
</protein>
<organism>
    <name type="scientific">Cyanidioschyzon merolae (strain NIES-3377 / 10D)</name>
    <name type="common">Unicellular red alga</name>
    <dbReference type="NCBI Taxonomy" id="280699"/>
    <lineage>
        <taxon>Eukaryota</taxon>
        <taxon>Rhodophyta</taxon>
        <taxon>Bangiophyceae</taxon>
        <taxon>Cyanidiales</taxon>
        <taxon>Cyanidiaceae</taxon>
        <taxon>Cyanidioschyzon</taxon>
    </lineage>
</organism>